<sequence length="345" mass="40308">MGLAGTKVKQRFGLDPRNTNWSNNNNQFGHQYLTKMGWTPGKGIGLVPDSITTHLKINIKTDNAGLGAKLQKRNKDANELDECSGVDAFQRILGRLNGKEDAVNKVMDMKRDDMIINGKMGIRFVKGEVLSSTWDKEKKALISYANGKNEDKKDKDEVSLLRKRKVEDEEKREVKKSRKDIKEKKEKKEKKEKKEKKEKKEKKEKKEKKEKKEKKEKKEKKEKKEKKEKKEKSDKKEKKEKKDKKEKKEKKEKKEKKEKKEKKEKKEKKEKKEKKEKKEKKDKLDKESSNAANVESTKSLVSDSSRESTPTPIASRLSVRSKWIKQKRASVMDAKALNEIFMISN</sequence>
<keyword id="KW-0539">Nucleus</keyword>
<keyword id="KW-1185">Reference proteome</keyword>
<keyword id="KW-0690">Ribosome biogenesis</keyword>
<keyword id="KW-0698">rRNA processing</keyword>
<organism>
    <name type="scientific">Lodderomyces elongisporus (strain ATCC 11503 / CBS 2605 / JCM 1781 / NBRC 1676 / NRRL YB-4239)</name>
    <name type="common">Yeast</name>
    <name type="synonym">Saccharomyces elongisporus</name>
    <dbReference type="NCBI Taxonomy" id="379508"/>
    <lineage>
        <taxon>Eukaryota</taxon>
        <taxon>Fungi</taxon>
        <taxon>Dikarya</taxon>
        <taxon>Ascomycota</taxon>
        <taxon>Saccharomycotina</taxon>
        <taxon>Pichiomycetes</taxon>
        <taxon>Debaryomycetaceae</taxon>
        <taxon>Candida/Lodderomyces clade</taxon>
        <taxon>Lodderomyces</taxon>
    </lineage>
</organism>
<dbReference type="EMBL" id="CH981529">
    <property type="protein sequence ID" value="EDK46399.1"/>
    <property type="molecule type" value="Genomic_DNA"/>
</dbReference>
<dbReference type="RefSeq" id="XP_001524608.1">
    <property type="nucleotide sequence ID" value="XM_001524558.1"/>
</dbReference>
<dbReference type="FunCoup" id="A5E4P1">
    <property type="interactions" value="210"/>
</dbReference>
<dbReference type="STRING" id="379508.A5E4P1"/>
<dbReference type="GeneID" id="5231354"/>
<dbReference type="KEGG" id="lel:PVL30_004301"/>
<dbReference type="VEuPathDB" id="FungiDB:LELG_04580"/>
<dbReference type="eggNOG" id="KOG2809">
    <property type="taxonomic scope" value="Eukaryota"/>
</dbReference>
<dbReference type="HOGENOM" id="CLU_052839_0_0_1"/>
<dbReference type="InParanoid" id="A5E4P1"/>
<dbReference type="OMA" id="PCWDQSS"/>
<dbReference type="OrthoDB" id="29523at2759"/>
<dbReference type="Proteomes" id="UP000001996">
    <property type="component" value="Unassembled WGS sequence"/>
</dbReference>
<dbReference type="GO" id="GO:0005730">
    <property type="term" value="C:nucleolus"/>
    <property type="evidence" value="ECO:0007669"/>
    <property type="project" value="UniProtKB-SubCell"/>
</dbReference>
<dbReference type="GO" id="GO:0005654">
    <property type="term" value="C:nucleoplasm"/>
    <property type="evidence" value="ECO:0007669"/>
    <property type="project" value="EnsemblFungi"/>
</dbReference>
<dbReference type="GO" id="GO:0000786">
    <property type="term" value="C:nucleosome"/>
    <property type="evidence" value="ECO:0007669"/>
    <property type="project" value="InterPro"/>
</dbReference>
<dbReference type="GO" id="GO:0032040">
    <property type="term" value="C:small-subunit processome"/>
    <property type="evidence" value="ECO:0007669"/>
    <property type="project" value="EnsemblFungi"/>
</dbReference>
<dbReference type="GO" id="GO:0003677">
    <property type="term" value="F:DNA binding"/>
    <property type="evidence" value="ECO:0007669"/>
    <property type="project" value="InterPro"/>
</dbReference>
<dbReference type="GO" id="GO:0008047">
    <property type="term" value="F:enzyme activator activity"/>
    <property type="evidence" value="ECO:0007669"/>
    <property type="project" value="EnsemblFungi"/>
</dbReference>
<dbReference type="GO" id="GO:0030527">
    <property type="term" value="F:structural constituent of chromatin"/>
    <property type="evidence" value="ECO:0007669"/>
    <property type="project" value="InterPro"/>
</dbReference>
<dbReference type="GO" id="GO:0010521">
    <property type="term" value="F:telomerase inhibitor activity"/>
    <property type="evidence" value="ECO:0007669"/>
    <property type="project" value="EnsemblFungi"/>
</dbReference>
<dbReference type="GO" id="GO:0000494">
    <property type="term" value="P:box C/D sno(s)RNA 3'-end processing"/>
    <property type="evidence" value="ECO:0007669"/>
    <property type="project" value="EnsemblFungi"/>
</dbReference>
<dbReference type="GO" id="GO:0032211">
    <property type="term" value="P:negative regulation of telomere maintenance via telomerase"/>
    <property type="evidence" value="ECO:0007669"/>
    <property type="project" value="EnsemblFungi"/>
</dbReference>
<dbReference type="GO" id="GO:0006334">
    <property type="term" value="P:nucleosome assembly"/>
    <property type="evidence" value="ECO:0007669"/>
    <property type="project" value="InterPro"/>
</dbReference>
<dbReference type="GO" id="GO:0006364">
    <property type="term" value="P:rRNA processing"/>
    <property type="evidence" value="ECO:0007669"/>
    <property type="project" value="UniProtKB-KW"/>
</dbReference>
<dbReference type="InterPro" id="IPR000467">
    <property type="entry name" value="G_patch_dom"/>
</dbReference>
<dbReference type="InterPro" id="IPR005819">
    <property type="entry name" value="H1/H5"/>
</dbReference>
<dbReference type="InterPro" id="IPR050656">
    <property type="entry name" value="PINX1"/>
</dbReference>
<dbReference type="PANTHER" id="PTHR23149">
    <property type="entry name" value="G PATCH DOMAIN CONTAINING PROTEIN"/>
    <property type="match status" value="1"/>
</dbReference>
<dbReference type="PANTHER" id="PTHR23149:SF31">
    <property type="entry name" value="PROTEIN PXR1"/>
    <property type="match status" value="1"/>
</dbReference>
<dbReference type="Pfam" id="PF01585">
    <property type="entry name" value="G-patch"/>
    <property type="match status" value="1"/>
</dbReference>
<dbReference type="PRINTS" id="PR00624">
    <property type="entry name" value="HISTONEH5"/>
</dbReference>
<dbReference type="SMART" id="SM00443">
    <property type="entry name" value="G_patch"/>
    <property type="match status" value="1"/>
</dbReference>
<dbReference type="PROSITE" id="PS50174">
    <property type="entry name" value="G_PATCH"/>
    <property type="match status" value="1"/>
</dbReference>
<proteinExistence type="inferred from homology"/>
<evidence type="ECO:0000250" key="1"/>
<evidence type="ECO:0000255" key="2">
    <source>
        <dbReference type="PROSITE-ProRule" id="PRU00092"/>
    </source>
</evidence>
<evidence type="ECO:0000256" key="3">
    <source>
        <dbReference type="SAM" id="MobiDB-lite"/>
    </source>
</evidence>
<evidence type="ECO:0000305" key="4"/>
<feature type="chain" id="PRO_0000324890" description="Protein PXR1">
    <location>
        <begin position="1"/>
        <end position="345"/>
    </location>
</feature>
<feature type="domain" description="G-patch" evidence="2">
    <location>
        <begin position="25"/>
        <end position="71"/>
    </location>
</feature>
<feature type="region of interest" description="Disordered" evidence="3">
    <location>
        <begin position="1"/>
        <end position="25"/>
    </location>
</feature>
<feature type="region of interest" description="Disordered" evidence="3">
    <location>
        <begin position="166"/>
        <end position="317"/>
    </location>
</feature>
<feature type="compositionally biased region" description="Basic residues" evidence="3">
    <location>
        <begin position="187"/>
        <end position="227"/>
    </location>
</feature>
<feature type="compositionally biased region" description="Basic and acidic residues" evidence="3">
    <location>
        <begin position="228"/>
        <end position="237"/>
    </location>
</feature>
<feature type="compositionally biased region" description="Basic residues" evidence="3">
    <location>
        <begin position="238"/>
        <end position="278"/>
    </location>
</feature>
<feature type="compositionally biased region" description="Basic and acidic residues" evidence="3">
    <location>
        <begin position="279"/>
        <end position="288"/>
    </location>
</feature>
<feature type="compositionally biased region" description="Polar residues" evidence="3">
    <location>
        <begin position="289"/>
        <end position="312"/>
    </location>
</feature>
<gene>
    <name type="primary">PXR1</name>
    <name type="ORF">LELG_04580</name>
</gene>
<comment type="function">
    <text evidence="1">Involved in rRNA-processing at A0, A1 and A2 sites and negatively regulates telomerase.</text>
</comment>
<comment type="subcellular location">
    <subcellularLocation>
        <location evidence="1">Nucleus</location>
        <location evidence="1">Nucleolus</location>
    </subcellularLocation>
</comment>
<comment type="similarity">
    <text evidence="4">Belongs to the PINX1 family.</text>
</comment>
<protein>
    <recommendedName>
        <fullName>Protein PXR1</fullName>
    </recommendedName>
    <alternativeName>
        <fullName>PinX1-related protein 1</fullName>
    </alternativeName>
</protein>
<reference key="1">
    <citation type="journal article" date="2009" name="Nature">
        <title>Evolution of pathogenicity and sexual reproduction in eight Candida genomes.</title>
        <authorList>
            <person name="Butler G."/>
            <person name="Rasmussen M.D."/>
            <person name="Lin M.F."/>
            <person name="Santos M.A.S."/>
            <person name="Sakthikumar S."/>
            <person name="Munro C.A."/>
            <person name="Rheinbay E."/>
            <person name="Grabherr M."/>
            <person name="Forche A."/>
            <person name="Reedy J.L."/>
            <person name="Agrafioti I."/>
            <person name="Arnaud M.B."/>
            <person name="Bates S."/>
            <person name="Brown A.J.P."/>
            <person name="Brunke S."/>
            <person name="Costanzo M.C."/>
            <person name="Fitzpatrick D.A."/>
            <person name="de Groot P.W.J."/>
            <person name="Harris D."/>
            <person name="Hoyer L.L."/>
            <person name="Hube B."/>
            <person name="Klis F.M."/>
            <person name="Kodira C."/>
            <person name="Lennard N."/>
            <person name="Logue M.E."/>
            <person name="Martin R."/>
            <person name="Neiman A.M."/>
            <person name="Nikolaou E."/>
            <person name="Quail M.A."/>
            <person name="Quinn J."/>
            <person name="Santos M.C."/>
            <person name="Schmitzberger F.F."/>
            <person name="Sherlock G."/>
            <person name="Shah P."/>
            <person name="Silverstein K.A.T."/>
            <person name="Skrzypek M.S."/>
            <person name="Soll D."/>
            <person name="Staggs R."/>
            <person name="Stansfield I."/>
            <person name="Stumpf M.P.H."/>
            <person name="Sudbery P.E."/>
            <person name="Srikantha T."/>
            <person name="Zeng Q."/>
            <person name="Berman J."/>
            <person name="Berriman M."/>
            <person name="Heitman J."/>
            <person name="Gow N.A.R."/>
            <person name="Lorenz M.C."/>
            <person name="Birren B.W."/>
            <person name="Kellis M."/>
            <person name="Cuomo C.A."/>
        </authorList>
    </citation>
    <scope>NUCLEOTIDE SEQUENCE [LARGE SCALE GENOMIC DNA]</scope>
    <source>
        <strain>ATCC 11503 / BCRC 21390 / CBS 2605 / JCM 1781 / NBRC 1676 / NRRL YB-4239</strain>
    </source>
</reference>
<name>PXR1_LODEL</name>
<accession>A5E4P1</accession>